<gene>
    <name evidence="5 7" type="primary">Nsun2</name>
    <name evidence="7" type="ORF">CG6133</name>
</gene>
<feature type="chain" id="PRO_0000289228" description="tRNA (cytosine(34)-C(5))-methyltransferase">
    <location>
        <begin position="1"/>
        <end position="746"/>
    </location>
</feature>
<feature type="region of interest" description="Disordered" evidence="3">
    <location>
        <begin position="1"/>
        <end position="30"/>
    </location>
</feature>
<feature type="region of interest" description="Disordered" evidence="3">
    <location>
        <begin position="454"/>
        <end position="475"/>
    </location>
</feature>
<feature type="region of interest" description="Disordered" evidence="3">
    <location>
        <begin position="701"/>
        <end position="746"/>
    </location>
</feature>
<feature type="compositionally biased region" description="Basic and acidic residues" evidence="3">
    <location>
        <begin position="18"/>
        <end position="30"/>
    </location>
</feature>
<feature type="compositionally biased region" description="Basic and acidic residues" evidence="3">
    <location>
        <begin position="463"/>
        <end position="472"/>
    </location>
</feature>
<feature type="compositionally biased region" description="Acidic residues" evidence="3">
    <location>
        <begin position="704"/>
        <end position="714"/>
    </location>
</feature>
<feature type="compositionally biased region" description="Polar residues" evidence="3">
    <location>
        <begin position="731"/>
        <end position="746"/>
    </location>
</feature>
<feature type="active site" description="Nucleophile" evidence="2">
    <location>
        <position position="323"/>
    </location>
</feature>
<feature type="binding site" evidence="2">
    <location>
        <begin position="184"/>
        <end position="190"/>
    </location>
    <ligand>
        <name>S-adenosyl-L-methionine</name>
        <dbReference type="ChEBI" id="CHEBI:59789"/>
    </ligand>
</feature>
<feature type="binding site" evidence="2">
    <location>
        <position position="216"/>
    </location>
    <ligand>
        <name>S-adenosyl-L-methionine</name>
        <dbReference type="ChEBI" id="CHEBI:59789"/>
    </ligand>
</feature>
<feature type="binding site" evidence="2">
    <location>
        <position position="243"/>
    </location>
    <ligand>
        <name>S-adenosyl-L-methionine</name>
        <dbReference type="ChEBI" id="CHEBI:59789"/>
    </ligand>
</feature>
<feature type="binding site" evidence="2">
    <location>
        <position position="270"/>
    </location>
    <ligand>
        <name>S-adenosyl-L-methionine</name>
        <dbReference type="ChEBI" id="CHEBI:59789"/>
    </ligand>
</feature>
<accession>Q9W4M9</accession>
<accession>O97427</accession>
<comment type="function">
    <text evidence="4">RNA methyltransferase that methylates tRNAs. Methylates cytosine to 5-methylcytosine (m5C) at position 34 of intron-containing tRNA(Leu)(CAA) precursors. Required for short-term memory.</text>
</comment>
<comment type="catalytic activity">
    <reaction evidence="4">
        <text>cytidine(34) in tRNA precursor + S-adenosyl-L-methionine = 5-methylcytidine(34) in tRNA precursor + S-adenosyl-L-homocysteine + H(+)</text>
        <dbReference type="Rhea" id="RHEA:42940"/>
        <dbReference type="Rhea" id="RHEA-COMP:10291"/>
        <dbReference type="Rhea" id="RHEA-COMP:10295"/>
        <dbReference type="ChEBI" id="CHEBI:15378"/>
        <dbReference type="ChEBI" id="CHEBI:57856"/>
        <dbReference type="ChEBI" id="CHEBI:59789"/>
        <dbReference type="ChEBI" id="CHEBI:74483"/>
        <dbReference type="ChEBI" id="CHEBI:82748"/>
        <dbReference type="EC" id="2.1.1.203"/>
    </reaction>
</comment>
<comment type="subcellular location">
    <subcellularLocation>
        <location evidence="1">Nucleus</location>
        <location evidence="1">Nucleolus</location>
    </subcellularLocation>
</comment>
<comment type="tissue specificity">
    <text evidence="4">Ubiquitously expressed during embryonic development. Some enrichment is observed in the proventriculus area of the foregut and in the hindgut.</text>
</comment>
<comment type="developmental stage">
    <text evidence="4">Expressed maternally and zygotically. Expressed during embryonic development.</text>
</comment>
<comment type="similarity">
    <text evidence="2">Belongs to the class I-like SAM-binding methyltransferase superfamily. RsmB/NOP family. TRM4 subfamily.</text>
</comment>
<comment type="sequence caution" evidence="6">
    <conflict type="frameshift">
        <sequence resource="EMBL-CDS" id="CAA21831"/>
    </conflict>
</comment>
<name>NSUN2_DROME</name>
<keyword id="KW-0489">Methyltransferase</keyword>
<keyword id="KW-0539">Nucleus</keyword>
<keyword id="KW-0597">Phosphoprotein</keyword>
<keyword id="KW-1185">Reference proteome</keyword>
<keyword id="KW-0694">RNA-binding</keyword>
<keyword id="KW-0949">S-adenosyl-L-methionine</keyword>
<keyword id="KW-0808">Transferase</keyword>
<keyword id="KW-0819">tRNA processing</keyword>
<keyword id="KW-0820">tRNA-binding</keyword>
<reference key="1">
    <citation type="journal article" date="2000" name="Science">
        <title>The genome sequence of Drosophila melanogaster.</title>
        <authorList>
            <person name="Adams M.D."/>
            <person name="Celniker S.E."/>
            <person name="Holt R.A."/>
            <person name="Evans C.A."/>
            <person name="Gocayne J.D."/>
            <person name="Amanatides P.G."/>
            <person name="Scherer S.E."/>
            <person name="Li P.W."/>
            <person name="Hoskins R.A."/>
            <person name="Galle R.F."/>
            <person name="George R.A."/>
            <person name="Lewis S.E."/>
            <person name="Richards S."/>
            <person name="Ashburner M."/>
            <person name="Henderson S.N."/>
            <person name="Sutton G.G."/>
            <person name="Wortman J.R."/>
            <person name="Yandell M.D."/>
            <person name="Zhang Q."/>
            <person name="Chen L.X."/>
            <person name="Brandon R.C."/>
            <person name="Rogers Y.-H.C."/>
            <person name="Blazej R.G."/>
            <person name="Champe M."/>
            <person name="Pfeiffer B.D."/>
            <person name="Wan K.H."/>
            <person name="Doyle C."/>
            <person name="Baxter E.G."/>
            <person name="Helt G."/>
            <person name="Nelson C.R."/>
            <person name="Miklos G.L.G."/>
            <person name="Abril J.F."/>
            <person name="Agbayani A."/>
            <person name="An H.-J."/>
            <person name="Andrews-Pfannkoch C."/>
            <person name="Baldwin D."/>
            <person name="Ballew R.M."/>
            <person name="Basu A."/>
            <person name="Baxendale J."/>
            <person name="Bayraktaroglu L."/>
            <person name="Beasley E.M."/>
            <person name="Beeson K.Y."/>
            <person name="Benos P.V."/>
            <person name="Berman B.P."/>
            <person name="Bhandari D."/>
            <person name="Bolshakov S."/>
            <person name="Borkova D."/>
            <person name="Botchan M.R."/>
            <person name="Bouck J."/>
            <person name="Brokstein P."/>
            <person name="Brottier P."/>
            <person name="Burtis K.C."/>
            <person name="Busam D.A."/>
            <person name="Butler H."/>
            <person name="Cadieu E."/>
            <person name="Center A."/>
            <person name="Chandra I."/>
            <person name="Cherry J.M."/>
            <person name="Cawley S."/>
            <person name="Dahlke C."/>
            <person name="Davenport L.B."/>
            <person name="Davies P."/>
            <person name="de Pablos B."/>
            <person name="Delcher A."/>
            <person name="Deng Z."/>
            <person name="Mays A.D."/>
            <person name="Dew I."/>
            <person name="Dietz S.M."/>
            <person name="Dodson K."/>
            <person name="Doup L.E."/>
            <person name="Downes M."/>
            <person name="Dugan-Rocha S."/>
            <person name="Dunkov B.C."/>
            <person name="Dunn P."/>
            <person name="Durbin K.J."/>
            <person name="Evangelista C.C."/>
            <person name="Ferraz C."/>
            <person name="Ferriera S."/>
            <person name="Fleischmann W."/>
            <person name="Fosler C."/>
            <person name="Gabrielian A.E."/>
            <person name="Garg N.S."/>
            <person name="Gelbart W.M."/>
            <person name="Glasser K."/>
            <person name="Glodek A."/>
            <person name="Gong F."/>
            <person name="Gorrell J.H."/>
            <person name="Gu Z."/>
            <person name="Guan P."/>
            <person name="Harris M."/>
            <person name="Harris N.L."/>
            <person name="Harvey D.A."/>
            <person name="Heiman T.J."/>
            <person name="Hernandez J.R."/>
            <person name="Houck J."/>
            <person name="Hostin D."/>
            <person name="Houston K.A."/>
            <person name="Howland T.J."/>
            <person name="Wei M.-H."/>
            <person name="Ibegwam C."/>
            <person name="Jalali M."/>
            <person name="Kalush F."/>
            <person name="Karpen G.H."/>
            <person name="Ke Z."/>
            <person name="Kennison J.A."/>
            <person name="Ketchum K.A."/>
            <person name="Kimmel B.E."/>
            <person name="Kodira C.D."/>
            <person name="Kraft C.L."/>
            <person name="Kravitz S."/>
            <person name="Kulp D."/>
            <person name="Lai Z."/>
            <person name="Lasko P."/>
            <person name="Lei Y."/>
            <person name="Levitsky A.A."/>
            <person name="Li J.H."/>
            <person name="Li Z."/>
            <person name="Liang Y."/>
            <person name="Lin X."/>
            <person name="Liu X."/>
            <person name="Mattei B."/>
            <person name="McIntosh T.C."/>
            <person name="McLeod M.P."/>
            <person name="McPherson D."/>
            <person name="Merkulov G."/>
            <person name="Milshina N.V."/>
            <person name="Mobarry C."/>
            <person name="Morris J."/>
            <person name="Moshrefi A."/>
            <person name="Mount S.M."/>
            <person name="Moy M."/>
            <person name="Murphy B."/>
            <person name="Murphy L."/>
            <person name="Muzny D.M."/>
            <person name="Nelson D.L."/>
            <person name="Nelson D.R."/>
            <person name="Nelson K.A."/>
            <person name="Nixon K."/>
            <person name="Nusskern D.R."/>
            <person name="Pacleb J.M."/>
            <person name="Palazzolo M."/>
            <person name="Pittman G.S."/>
            <person name="Pan S."/>
            <person name="Pollard J."/>
            <person name="Puri V."/>
            <person name="Reese M.G."/>
            <person name="Reinert K."/>
            <person name="Remington K."/>
            <person name="Saunders R.D.C."/>
            <person name="Scheeler F."/>
            <person name="Shen H."/>
            <person name="Shue B.C."/>
            <person name="Siden-Kiamos I."/>
            <person name="Simpson M."/>
            <person name="Skupski M.P."/>
            <person name="Smith T.J."/>
            <person name="Spier E."/>
            <person name="Spradling A.C."/>
            <person name="Stapleton M."/>
            <person name="Strong R."/>
            <person name="Sun E."/>
            <person name="Svirskas R."/>
            <person name="Tector C."/>
            <person name="Turner R."/>
            <person name="Venter E."/>
            <person name="Wang A.H."/>
            <person name="Wang X."/>
            <person name="Wang Z.-Y."/>
            <person name="Wassarman D.A."/>
            <person name="Weinstock G.M."/>
            <person name="Weissenbach J."/>
            <person name="Williams S.M."/>
            <person name="Woodage T."/>
            <person name="Worley K.C."/>
            <person name="Wu D."/>
            <person name="Yang S."/>
            <person name="Yao Q.A."/>
            <person name="Ye J."/>
            <person name="Yeh R.-F."/>
            <person name="Zaveri J.S."/>
            <person name="Zhan M."/>
            <person name="Zhang G."/>
            <person name="Zhao Q."/>
            <person name="Zheng L."/>
            <person name="Zheng X.H."/>
            <person name="Zhong F.N."/>
            <person name="Zhong W."/>
            <person name="Zhou X."/>
            <person name="Zhu S.C."/>
            <person name="Zhu X."/>
            <person name="Smith H.O."/>
            <person name="Gibbs R.A."/>
            <person name="Myers E.W."/>
            <person name="Rubin G.M."/>
            <person name="Venter J.C."/>
        </authorList>
    </citation>
    <scope>NUCLEOTIDE SEQUENCE [LARGE SCALE GENOMIC DNA]</scope>
    <source>
        <strain>Berkeley</strain>
    </source>
</reference>
<reference key="2">
    <citation type="journal article" date="2002" name="Genome Biol.">
        <title>Annotation of the Drosophila melanogaster euchromatic genome: a systematic review.</title>
        <authorList>
            <person name="Misra S."/>
            <person name="Crosby M.A."/>
            <person name="Mungall C.J."/>
            <person name="Matthews B.B."/>
            <person name="Campbell K.S."/>
            <person name="Hradecky P."/>
            <person name="Huang Y."/>
            <person name="Kaminker J.S."/>
            <person name="Millburn G.H."/>
            <person name="Prochnik S.E."/>
            <person name="Smith C.D."/>
            <person name="Tupy J.L."/>
            <person name="Whitfield E.J."/>
            <person name="Bayraktaroglu L."/>
            <person name="Berman B.P."/>
            <person name="Bettencourt B.R."/>
            <person name="Celniker S.E."/>
            <person name="de Grey A.D.N.J."/>
            <person name="Drysdale R.A."/>
            <person name="Harris N.L."/>
            <person name="Richter J."/>
            <person name="Russo S."/>
            <person name="Schroeder A.J."/>
            <person name="Shu S.Q."/>
            <person name="Stapleton M."/>
            <person name="Yamada C."/>
            <person name="Ashburner M."/>
            <person name="Gelbart W.M."/>
            <person name="Rubin G.M."/>
            <person name="Lewis S.E."/>
        </authorList>
    </citation>
    <scope>GENOME REANNOTATION</scope>
    <source>
        <strain>Berkeley</strain>
    </source>
</reference>
<reference key="3">
    <citation type="journal article" date="2000" name="Science">
        <title>From sequence to chromosome: the tip of the X chromosome of D. melanogaster.</title>
        <authorList>
            <person name="Benos P.V."/>
            <person name="Gatt M.K."/>
            <person name="Ashburner M."/>
            <person name="Murphy L."/>
            <person name="Harris D."/>
            <person name="Barrell B.G."/>
            <person name="Ferraz C."/>
            <person name="Vidal S."/>
            <person name="Brun C."/>
            <person name="Demailles J."/>
            <person name="Cadieu E."/>
            <person name="Dreano S."/>
            <person name="Gloux S."/>
            <person name="Lelaure V."/>
            <person name="Mottier S."/>
            <person name="Galibert F."/>
            <person name="Borkova D."/>
            <person name="Minana B."/>
            <person name="Kafatos F.C."/>
            <person name="Louis C."/>
            <person name="Siden-Kiamos I."/>
            <person name="Bolshakov S."/>
            <person name="Papagiannakis G."/>
            <person name="Spanos L."/>
            <person name="Cox S."/>
            <person name="Madueno E."/>
            <person name="de Pablos B."/>
            <person name="Modolell J."/>
            <person name="Peter A."/>
            <person name="Schoettler P."/>
            <person name="Werner M."/>
            <person name="Mourkioti F."/>
            <person name="Beinert N."/>
            <person name="Dowe G."/>
            <person name="Schaefer U."/>
            <person name="Jaeckle H."/>
            <person name="Bucheton A."/>
            <person name="Callister D.M."/>
            <person name="Campbell L.A."/>
            <person name="Darlamitsou A."/>
            <person name="Henderson N.S."/>
            <person name="McMillan P.J."/>
            <person name="Salles C."/>
            <person name="Tait E.A."/>
            <person name="Valenti P."/>
            <person name="Saunders R.D.C."/>
            <person name="Glover D.M."/>
        </authorList>
    </citation>
    <scope>NUCLEOTIDE SEQUENCE [LARGE SCALE GENOMIC DNA]</scope>
    <source>
        <strain>Oregon-R</strain>
    </source>
</reference>
<reference key="4">
    <citation type="journal article" date="2002" name="Genome Biol.">
        <title>A Drosophila full-length cDNA resource.</title>
        <authorList>
            <person name="Stapleton M."/>
            <person name="Carlson J.W."/>
            <person name="Brokstein P."/>
            <person name="Yu C."/>
            <person name="Champe M."/>
            <person name="George R.A."/>
            <person name="Guarin H."/>
            <person name="Kronmiller B."/>
            <person name="Pacleb J.M."/>
            <person name="Park S."/>
            <person name="Wan K.H."/>
            <person name="Rubin G.M."/>
            <person name="Celniker S.E."/>
        </authorList>
    </citation>
    <scope>NUCLEOTIDE SEQUENCE [LARGE SCALE MRNA]</scope>
    <source>
        <strain>Berkeley</strain>
        <tissue>Embryo</tissue>
    </source>
</reference>
<reference key="5">
    <citation type="journal article" date="2012" name="Am. J. Hum. Genet.">
        <title>Mutations in NSUN2 cause autosomal-recessive intellectual disability.</title>
        <authorList>
            <person name="Abbasi-Moheb L."/>
            <person name="Mertel S."/>
            <person name="Gonsior M."/>
            <person name="Nouri-Vahid L."/>
            <person name="Kahrizi K."/>
            <person name="Cirak S."/>
            <person name="Wieczorek D."/>
            <person name="Motazacker M.M."/>
            <person name="Esmaeeli-Nieh S."/>
            <person name="Cremer K."/>
            <person name="Weissmann R."/>
            <person name="Tzschach A."/>
            <person name="Garshasbi M."/>
            <person name="Abedini S.S."/>
            <person name="Najmabadi H."/>
            <person name="Ropers H.H."/>
            <person name="Sigrist S.J."/>
            <person name="Kuss A.W."/>
        </authorList>
    </citation>
    <scope>FUNCTION</scope>
    <scope>TISSUE SPECIFICITY</scope>
    <scope>DEVELOPMENTAL STAGE</scope>
</reference>
<sequence length="746" mass="84162">MGRNQKQNFFAARKRQKRENGPKRTDRQAQPYEEIKRDNAFFIKYYQLQKICATDEEWTQFLASIRDNLPTTFRVTGFKDEAKALLSIIETQLFTEYVRAVAELHQKAPEDVERPLCLPWYPNGLAYQLHLTRKDIRRSEPLYRLHNFLIVETTAGGISRQEAVSMIPPIVLDVRPTDKVLDMCAAPGSKTAQLIEALHAAPEEHKIPPGFVLANDVDNNRCYMLVHQAKRLNSPCLLVTNHDSSVFPNLVTTKPDGSKAILKFDKILCDVPCSGDGTLRKNPDIWLKWNLAQAYNLHGIQYRIVRRGAEMLEVGGRLVYSTCSLNPIENEAVLQRIIKDADGALELVDAGHLVPGLKYKPGMTDWKLATKEVDQIFTRFEEVPESLHTIIRPGMFPLPADEMAKIGLEKCLRVLPHLQDSGGFFVAVLEKRRQLSFEKNDVVELVKLNETAKQPAAEPQVDADGKPIEEKSVPWGPQRKKRRLHGYKEDPYVFFGENDPDYQAIKEFYQLDESLSQRCLLTRCVTEKKKNIYYCSEPIRDLVLNNENNIKIINTGVKTFVRCENRHTVHPFRLAQEGLQTSNAFMGASRRIQVEREDLVMMLNCTDPTQPPSTHELKKETQERCKELGVGSCILKYVDQRFTLYTVGWRGTSSLRAYVQKDETIHILRLLGADLSKFETNKYEDARVAAAAAADAEVGKSAEAEADSSGDGDATESTFSGSGAIDVTVAAETTGTPMDTEVVATS</sequence>
<evidence type="ECO:0000250" key="1">
    <source>
        <dbReference type="UniProtKB" id="Q08J23"/>
    </source>
</evidence>
<evidence type="ECO:0000255" key="2">
    <source>
        <dbReference type="PROSITE-ProRule" id="PRU01023"/>
    </source>
</evidence>
<evidence type="ECO:0000256" key="3">
    <source>
        <dbReference type="SAM" id="MobiDB-lite"/>
    </source>
</evidence>
<evidence type="ECO:0000269" key="4">
    <source>
    </source>
</evidence>
<evidence type="ECO:0000303" key="5">
    <source>
    </source>
</evidence>
<evidence type="ECO:0000305" key="6"/>
<evidence type="ECO:0000312" key="7">
    <source>
        <dbReference type="FlyBase" id="FBgn0026079"/>
    </source>
</evidence>
<proteinExistence type="evidence at transcript level"/>
<dbReference type="EC" id="2.1.1.203" evidence="4"/>
<dbReference type="EMBL" id="AE014298">
    <property type="protein sequence ID" value="AAF45921.1"/>
    <property type="molecule type" value="Genomic_DNA"/>
</dbReference>
<dbReference type="EMBL" id="AL033125">
    <property type="protein sequence ID" value="CAA21831.1"/>
    <property type="status" value="ALT_FRAME"/>
    <property type="molecule type" value="Genomic_DNA"/>
</dbReference>
<dbReference type="EMBL" id="AY061496">
    <property type="protein sequence ID" value="AAL29044.1"/>
    <property type="molecule type" value="mRNA"/>
</dbReference>
<dbReference type="RefSeq" id="NP_652007.1">
    <property type="nucleotide sequence ID" value="NM_143750.3"/>
</dbReference>
<dbReference type="SMR" id="Q9W4M9"/>
<dbReference type="BioGRID" id="69457">
    <property type="interactions" value="23"/>
</dbReference>
<dbReference type="FunCoup" id="Q9W4M9">
    <property type="interactions" value="2591"/>
</dbReference>
<dbReference type="IntAct" id="Q9W4M9">
    <property type="interactions" value="68"/>
</dbReference>
<dbReference type="STRING" id="7227.FBpp0070637"/>
<dbReference type="PaxDb" id="7227-FBpp0070637"/>
<dbReference type="EnsemblMetazoa" id="FBtr0070669">
    <property type="protein sequence ID" value="FBpp0070637"/>
    <property type="gene ID" value="FBgn0026079"/>
</dbReference>
<dbReference type="GeneID" id="45064"/>
<dbReference type="KEGG" id="dme:Dmel_CG6133"/>
<dbReference type="UCSC" id="CG6133-RA">
    <property type="organism name" value="d. melanogaster"/>
</dbReference>
<dbReference type="AGR" id="FB:FBgn0026079"/>
<dbReference type="CTD" id="54888"/>
<dbReference type="FlyBase" id="FBgn0026079">
    <property type="gene designation" value="Nsun2"/>
</dbReference>
<dbReference type="VEuPathDB" id="VectorBase:FBgn0026079"/>
<dbReference type="eggNOG" id="KOG2198">
    <property type="taxonomic scope" value="Eukaryota"/>
</dbReference>
<dbReference type="GeneTree" id="ENSGT00940000153665"/>
<dbReference type="HOGENOM" id="CLU_005316_4_3_1"/>
<dbReference type="InParanoid" id="Q9W4M9"/>
<dbReference type="OMA" id="QLFTEYV"/>
<dbReference type="OrthoDB" id="6093671at2759"/>
<dbReference type="PhylomeDB" id="Q9W4M9"/>
<dbReference type="BRENDA" id="2.1.1.203">
    <property type="organism ID" value="1994"/>
</dbReference>
<dbReference type="BioGRID-ORCS" id="45064">
    <property type="hits" value="0 hits in 1 CRISPR screen"/>
</dbReference>
<dbReference type="GenomeRNAi" id="45064"/>
<dbReference type="PRO" id="PR:Q9W4M9"/>
<dbReference type="Proteomes" id="UP000000803">
    <property type="component" value="Chromosome X"/>
</dbReference>
<dbReference type="Bgee" id="FBgn0026079">
    <property type="expression patterns" value="Expressed in embryonic/larval proventriculus (Drosophila) and 52 other cell types or tissues"/>
</dbReference>
<dbReference type="GO" id="GO:0005737">
    <property type="term" value="C:cytoplasm"/>
    <property type="evidence" value="ECO:0000250"/>
    <property type="project" value="UniProtKB"/>
</dbReference>
<dbReference type="GO" id="GO:0005739">
    <property type="term" value="C:mitochondrion"/>
    <property type="evidence" value="ECO:0000250"/>
    <property type="project" value="FlyBase"/>
</dbReference>
<dbReference type="GO" id="GO:0005730">
    <property type="term" value="C:nucleolus"/>
    <property type="evidence" value="ECO:0000250"/>
    <property type="project" value="UniProtKB"/>
</dbReference>
<dbReference type="GO" id="GO:0005634">
    <property type="term" value="C:nucleus"/>
    <property type="evidence" value="ECO:0000314"/>
    <property type="project" value="FlyBase"/>
</dbReference>
<dbReference type="GO" id="GO:0003723">
    <property type="term" value="F:RNA binding"/>
    <property type="evidence" value="ECO:0000315"/>
    <property type="project" value="FlyBase"/>
</dbReference>
<dbReference type="GO" id="GO:0016428">
    <property type="term" value="F:tRNA (cytidine-5-)-methyltransferase activity"/>
    <property type="evidence" value="ECO:0000250"/>
    <property type="project" value="UniProtKB"/>
</dbReference>
<dbReference type="GO" id="GO:0000049">
    <property type="term" value="F:tRNA binding"/>
    <property type="evidence" value="ECO:0000318"/>
    <property type="project" value="GO_Central"/>
</dbReference>
<dbReference type="GO" id="GO:0001510">
    <property type="term" value="P:RNA methylation"/>
    <property type="evidence" value="ECO:0000250"/>
    <property type="project" value="FlyBase"/>
</dbReference>
<dbReference type="GO" id="GO:0007614">
    <property type="term" value="P:short-term memory"/>
    <property type="evidence" value="ECO:0000315"/>
    <property type="project" value="FlyBase"/>
</dbReference>
<dbReference type="GO" id="GO:0030488">
    <property type="term" value="P:tRNA methylation"/>
    <property type="evidence" value="ECO:0000315"/>
    <property type="project" value="FlyBase"/>
</dbReference>
<dbReference type="Gene3D" id="3.40.50.150">
    <property type="entry name" value="Vaccinia Virus protein VP39"/>
    <property type="match status" value="1"/>
</dbReference>
<dbReference type="InterPro" id="IPR049560">
    <property type="entry name" value="MeTrfase_RsmB-F_NOP2_cat"/>
</dbReference>
<dbReference type="InterPro" id="IPR001678">
    <property type="entry name" value="MeTrfase_RsmB-F_NOP2_dom"/>
</dbReference>
<dbReference type="InterPro" id="IPR023267">
    <property type="entry name" value="RCMT"/>
</dbReference>
<dbReference type="InterPro" id="IPR023270">
    <property type="entry name" value="RCMT_NCL1"/>
</dbReference>
<dbReference type="InterPro" id="IPR018314">
    <property type="entry name" value="RsmB/NOL1/NOP2-like_CS"/>
</dbReference>
<dbReference type="InterPro" id="IPR029063">
    <property type="entry name" value="SAM-dependent_MTases_sf"/>
</dbReference>
<dbReference type="PANTHER" id="PTHR22808">
    <property type="entry name" value="NCL1 YEAST -RELATED NOL1/NOP2/FMU SUN DOMAIN-CONTAINING"/>
    <property type="match status" value="1"/>
</dbReference>
<dbReference type="PANTHER" id="PTHR22808:SF1">
    <property type="entry name" value="RNA CYTOSINE-C(5)-METHYLTRANSFERASE NSUN2-RELATED"/>
    <property type="match status" value="1"/>
</dbReference>
<dbReference type="Pfam" id="PF01189">
    <property type="entry name" value="Methyltr_RsmB-F"/>
    <property type="match status" value="1"/>
</dbReference>
<dbReference type="Pfam" id="PF25376">
    <property type="entry name" value="Pre-PUA_NSUN2"/>
    <property type="match status" value="1"/>
</dbReference>
<dbReference type="Pfam" id="PF25378">
    <property type="entry name" value="PUA_NSUN2"/>
    <property type="match status" value="1"/>
</dbReference>
<dbReference type="PRINTS" id="PR02008">
    <property type="entry name" value="RCMTFAMILY"/>
</dbReference>
<dbReference type="PRINTS" id="PR02011">
    <property type="entry name" value="RCMTNCL1"/>
</dbReference>
<dbReference type="SUPFAM" id="SSF53335">
    <property type="entry name" value="S-adenosyl-L-methionine-dependent methyltransferases"/>
    <property type="match status" value="1"/>
</dbReference>
<dbReference type="PROSITE" id="PS01153">
    <property type="entry name" value="NOL1_NOP2_SUN"/>
    <property type="match status" value="1"/>
</dbReference>
<dbReference type="PROSITE" id="PS51686">
    <property type="entry name" value="SAM_MT_RSMB_NOP"/>
    <property type="match status" value="1"/>
</dbReference>
<protein>
    <recommendedName>
        <fullName>tRNA (cytosine(34)-C(5))-methyltransferase</fullName>
        <ecNumber evidence="4">2.1.1.203</ecNumber>
    </recommendedName>
    <alternativeName>
        <fullName evidence="5">NOP2/Sun domain family member 2 ortholog</fullName>
    </alternativeName>
</protein>
<organism>
    <name type="scientific">Drosophila melanogaster</name>
    <name type="common">Fruit fly</name>
    <dbReference type="NCBI Taxonomy" id="7227"/>
    <lineage>
        <taxon>Eukaryota</taxon>
        <taxon>Metazoa</taxon>
        <taxon>Ecdysozoa</taxon>
        <taxon>Arthropoda</taxon>
        <taxon>Hexapoda</taxon>
        <taxon>Insecta</taxon>
        <taxon>Pterygota</taxon>
        <taxon>Neoptera</taxon>
        <taxon>Endopterygota</taxon>
        <taxon>Diptera</taxon>
        <taxon>Brachycera</taxon>
        <taxon>Muscomorpha</taxon>
        <taxon>Ephydroidea</taxon>
        <taxon>Drosophilidae</taxon>
        <taxon>Drosophila</taxon>
        <taxon>Sophophora</taxon>
    </lineage>
</organism>